<name>FIP1_EREGS</name>
<gene>
    <name type="primary">FIP1</name>
    <name type="ordered locus">AGL307W</name>
</gene>
<comment type="function">
    <text evidence="1">Pre-mRNA polyadenylation factor that directly interacts with poly(A) polymerase.</text>
</comment>
<comment type="subcellular location">
    <subcellularLocation>
        <location evidence="1">Nucleus</location>
    </subcellularLocation>
</comment>
<comment type="similarity">
    <text evidence="3">Belongs to the FIP1 family.</text>
</comment>
<keyword id="KW-0507">mRNA processing</keyword>
<keyword id="KW-0539">Nucleus</keyword>
<keyword id="KW-1185">Reference proteome</keyword>
<reference key="1">
    <citation type="journal article" date="2004" name="Science">
        <title>The Ashbya gossypii genome as a tool for mapping the ancient Saccharomyces cerevisiae genome.</title>
        <authorList>
            <person name="Dietrich F.S."/>
            <person name="Voegeli S."/>
            <person name="Brachat S."/>
            <person name="Lerch A."/>
            <person name="Gates K."/>
            <person name="Steiner S."/>
            <person name="Mohr C."/>
            <person name="Poehlmann R."/>
            <person name="Luedi P."/>
            <person name="Choi S."/>
            <person name="Wing R.A."/>
            <person name="Flavier A."/>
            <person name="Gaffney T.D."/>
            <person name="Philippsen P."/>
        </authorList>
    </citation>
    <scope>NUCLEOTIDE SEQUENCE [LARGE SCALE GENOMIC DNA]</scope>
    <source>
        <strain>ATCC 10895 / CBS 109.51 / FGSC 9923 / NRRL Y-1056</strain>
    </source>
</reference>
<reference key="2">
    <citation type="journal article" date="2013" name="G3 (Bethesda)">
        <title>Genomes of Ashbya fungi isolated from insects reveal four mating-type loci, numerous translocations, lack of transposons, and distinct gene duplications.</title>
        <authorList>
            <person name="Dietrich F.S."/>
            <person name="Voegeli S."/>
            <person name="Kuo S."/>
            <person name="Philippsen P."/>
        </authorList>
    </citation>
    <scope>GENOME REANNOTATION</scope>
    <source>
        <strain>ATCC 10895 / CBS 109.51 / FGSC 9923 / NRRL Y-1056</strain>
    </source>
</reference>
<proteinExistence type="inferred from homology"/>
<organism>
    <name type="scientific">Eremothecium gossypii (strain ATCC 10895 / CBS 109.51 / FGSC 9923 / NRRL Y-1056)</name>
    <name type="common">Yeast</name>
    <name type="synonym">Ashbya gossypii</name>
    <dbReference type="NCBI Taxonomy" id="284811"/>
    <lineage>
        <taxon>Eukaryota</taxon>
        <taxon>Fungi</taxon>
        <taxon>Dikarya</taxon>
        <taxon>Ascomycota</taxon>
        <taxon>Saccharomycotina</taxon>
        <taxon>Saccharomycetes</taxon>
        <taxon>Saccharomycetales</taxon>
        <taxon>Saccharomycetaceae</taxon>
        <taxon>Eremothecium</taxon>
    </lineage>
</organism>
<evidence type="ECO:0000250" key="1"/>
<evidence type="ECO:0000256" key="2">
    <source>
        <dbReference type="SAM" id="MobiDB-lite"/>
    </source>
</evidence>
<evidence type="ECO:0000305" key="3"/>
<sequence length="323" mass="34218">MQLRAAQHLIAEELQMASSDDEDEKFLYGSEDEADGPRGQQKRKLIPQGTAQIQEPDTKRARGADDGDVDMLDDDDEEEDDDEDEDDEDSDSDVEIIIGTGADSSKLDSKALTTPSTAATATSAAESAIAPVSEQSAPVAAVQSGDSGAAMDKAVGALDINAVGEYEGTPITDIDPEVLKEKPWRQPGANLSDYFNYGFTEETWMEYLHKQEKLRKEYNPRKILMGLLALQQQGKLGDGGAGDGVMLSAGGMAHNDIKSPNKNNGSLPQPPAFPMGMPPMFGGFPPFPFPGMIPPNLGAASGNNGSGNHQNMGTSSGNGNNGK</sequence>
<dbReference type="EMBL" id="AE016820">
    <property type="protein sequence ID" value="AAS54184.1"/>
    <property type="molecule type" value="Genomic_DNA"/>
</dbReference>
<dbReference type="RefSeq" id="NP_986360.1">
    <property type="nucleotide sequence ID" value="NM_211422.1"/>
</dbReference>
<dbReference type="SMR" id="Q751K8"/>
<dbReference type="FunCoup" id="Q751K8">
    <property type="interactions" value="257"/>
</dbReference>
<dbReference type="STRING" id="284811.Q751K8"/>
<dbReference type="EnsemblFungi" id="AAS54184">
    <property type="protein sequence ID" value="AAS54184"/>
    <property type="gene ID" value="AGOS_AGL307W"/>
</dbReference>
<dbReference type="GeneID" id="4622653"/>
<dbReference type="KEGG" id="ago:AGOS_AGL307W"/>
<dbReference type="eggNOG" id="KOG1049">
    <property type="taxonomic scope" value="Eukaryota"/>
</dbReference>
<dbReference type="HOGENOM" id="CLU_039307_2_1_1"/>
<dbReference type="InParanoid" id="Q751K8"/>
<dbReference type="OMA" id="GFNEYTW"/>
<dbReference type="OrthoDB" id="1917198at2759"/>
<dbReference type="Proteomes" id="UP000000591">
    <property type="component" value="Chromosome VII"/>
</dbReference>
<dbReference type="GO" id="GO:0005847">
    <property type="term" value="C:mRNA cleavage and polyadenylation specificity factor complex"/>
    <property type="evidence" value="ECO:0000318"/>
    <property type="project" value="GO_Central"/>
</dbReference>
<dbReference type="GO" id="GO:0030674">
    <property type="term" value="F:protein-macromolecule adaptor activity"/>
    <property type="evidence" value="ECO:0007669"/>
    <property type="project" value="EnsemblFungi"/>
</dbReference>
<dbReference type="GO" id="GO:0003723">
    <property type="term" value="F:RNA binding"/>
    <property type="evidence" value="ECO:0007669"/>
    <property type="project" value="EnsemblFungi"/>
</dbReference>
<dbReference type="GO" id="GO:0006397">
    <property type="term" value="P:mRNA processing"/>
    <property type="evidence" value="ECO:0007669"/>
    <property type="project" value="UniProtKB-KW"/>
</dbReference>
<dbReference type="InterPro" id="IPR007854">
    <property type="entry name" value="Fip1_dom"/>
</dbReference>
<dbReference type="InterPro" id="IPR051187">
    <property type="entry name" value="Pre-mRNA_3'-end_processing_reg"/>
</dbReference>
<dbReference type="PANTHER" id="PTHR13484">
    <property type="entry name" value="FIP1-LIKE 1 PROTEIN"/>
    <property type="match status" value="1"/>
</dbReference>
<dbReference type="PANTHER" id="PTHR13484:SF0">
    <property type="entry name" value="PRE-MRNA 3'-END-PROCESSING FACTOR FIP1"/>
    <property type="match status" value="1"/>
</dbReference>
<dbReference type="Pfam" id="PF05182">
    <property type="entry name" value="Fip1"/>
    <property type="match status" value="1"/>
</dbReference>
<accession>Q751K8</accession>
<feature type="chain" id="PRO_0000238507" description="Pre-mRNA polyadenylation factor FIP1">
    <location>
        <begin position="1"/>
        <end position="323"/>
    </location>
</feature>
<feature type="region of interest" description="Disordered" evidence="2">
    <location>
        <begin position="1"/>
        <end position="94"/>
    </location>
</feature>
<feature type="region of interest" description="Disordered" evidence="2">
    <location>
        <begin position="292"/>
        <end position="323"/>
    </location>
</feature>
<feature type="compositionally biased region" description="Acidic residues" evidence="2">
    <location>
        <begin position="19"/>
        <end position="34"/>
    </location>
</feature>
<feature type="compositionally biased region" description="Basic and acidic residues" evidence="2">
    <location>
        <begin position="56"/>
        <end position="65"/>
    </location>
</feature>
<feature type="compositionally biased region" description="Acidic residues" evidence="2">
    <location>
        <begin position="66"/>
        <end position="94"/>
    </location>
</feature>
<feature type="compositionally biased region" description="Low complexity" evidence="2">
    <location>
        <begin position="294"/>
        <end position="323"/>
    </location>
</feature>
<protein>
    <recommendedName>
        <fullName>Pre-mRNA polyadenylation factor FIP1</fullName>
    </recommendedName>
</protein>